<gene>
    <name type="primary">aor</name>
    <name type="ordered locus">PYRAB09630</name>
    <name type="ORF">PAB0647</name>
</gene>
<accession>Q9V035</accession>
<accession>G8ZIC8</accession>
<comment type="catalytic activity">
    <reaction evidence="1">
        <text>an aldehyde + 2 oxidized [2Fe-2S]-[ferredoxin] + H2O = a carboxylate + 2 reduced [2Fe-2S]-[ferredoxin] + 3 H(+)</text>
        <dbReference type="Rhea" id="RHEA:16421"/>
        <dbReference type="Rhea" id="RHEA-COMP:10000"/>
        <dbReference type="Rhea" id="RHEA-COMP:10001"/>
        <dbReference type="ChEBI" id="CHEBI:15377"/>
        <dbReference type="ChEBI" id="CHEBI:15378"/>
        <dbReference type="ChEBI" id="CHEBI:17478"/>
        <dbReference type="ChEBI" id="CHEBI:29067"/>
        <dbReference type="ChEBI" id="CHEBI:33737"/>
        <dbReference type="ChEBI" id="CHEBI:33738"/>
        <dbReference type="EC" id="1.2.7.5"/>
    </reaction>
</comment>
<comment type="cofactor">
    <cofactor evidence="1">
        <name>[4Fe-4S] cluster</name>
        <dbReference type="ChEBI" id="CHEBI:49883"/>
    </cofactor>
    <text evidence="1">Binds 1 [4Fe-4S] cluster per subunit.</text>
</comment>
<comment type="cofactor">
    <cofactor evidence="1">
        <name>tungstopterin</name>
        <dbReference type="ChEBI" id="CHEBI:30402"/>
    </cofactor>
    <text evidence="1">Binds 1 tungstopterin cofactor per subunit.</text>
</comment>
<comment type="subunit">
    <text evidence="1">Homodimer.</text>
</comment>
<comment type="similarity">
    <text evidence="2">Belongs to the AOR/FOR family.</text>
</comment>
<feature type="chain" id="PRO_0000064605" description="Tungsten-containing aldehyde ferredoxin oxidoreductase">
    <location>
        <begin position="1"/>
        <end position="607"/>
    </location>
</feature>
<feature type="binding site" evidence="1">
    <location>
        <position position="76"/>
    </location>
    <ligand>
        <name>tungstopterin</name>
        <dbReference type="ChEBI" id="CHEBI:30402"/>
    </ligand>
</feature>
<feature type="binding site" evidence="1">
    <location>
        <position position="93"/>
    </location>
    <ligand>
        <name>tungstopterin</name>
        <dbReference type="ChEBI" id="CHEBI:30402"/>
    </ligand>
</feature>
<feature type="binding site" evidence="1">
    <location>
        <position position="95"/>
    </location>
    <ligand>
        <name>tungstopterin</name>
        <dbReference type="ChEBI" id="CHEBI:30402"/>
    </ligand>
</feature>
<feature type="binding site" evidence="1">
    <location>
        <position position="182"/>
    </location>
    <ligand>
        <name>tungstopterin</name>
        <dbReference type="ChEBI" id="CHEBI:30402"/>
    </ligand>
</feature>
<feature type="binding site" evidence="1">
    <location>
        <position position="183"/>
    </location>
    <ligand>
        <name>tungstopterin</name>
        <dbReference type="ChEBI" id="CHEBI:30402"/>
    </ligand>
</feature>
<feature type="binding site" evidence="1">
    <location>
        <position position="185"/>
    </location>
    <ligand>
        <name>tungstopterin</name>
        <dbReference type="ChEBI" id="CHEBI:30402"/>
    </ligand>
</feature>
<feature type="binding site" evidence="1">
    <location>
        <position position="186"/>
    </location>
    <ligand>
        <name>tungstopterin</name>
        <dbReference type="ChEBI" id="CHEBI:30402"/>
    </ligand>
</feature>
<feature type="binding site" evidence="1">
    <location>
        <position position="288"/>
    </location>
    <ligand>
        <name>[4Fe-4S] cluster</name>
        <dbReference type="ChEBI" id="CHEBI:49883"/>
    </ligand>
</feature>
<feature type="binding site" evidence="1">
    <location>
        <position position="291"/>
    </location>
    <ligand>
        <name>[4Fe-4S] cluster</name>
        <dbReference type="ChEBI" id="CHEBI:49883"/>
    </ligand>
</feature>
<feature type="binding site" evidence="1">
    <location>
        <position position="295"/>
    </location>
    <ligand>
        <name>[4Fe-4S] cluster</name>
        <dbReference type="ChEBI" id="CHEBI:49883"/>
    </ligand>
</feature>
<feature type="binding site" evidence="1">
    <location>
        <position position="338"/>
    </location>
    <ligand>
        <name>tungstopterin</name>
        <dbReference type="ChEBI" id="CHEBI:30402"/>
    </ligand>
</feature>
<feature type="binding site" evidence="1">
    <location>
        <position position="343"/>
    </location>
    <ligand>
        <name>tungstopterin</name>
        <dbReference type="ChEBI" id="CHEBI:30402"/>
    </ligand>
</feature>
<feature type="binding site" evidence="1">
    <location>
        <position position="446"/>
    </location>
    <ligand>
        <name>tungstopterin</name>
        <dbReference type="ChEBI" id="CHEBI:30402"/>
    </ligand>
</feature>
<feature type="binding site" evidence="1">
    <location>
        <position position="452"/>
    </location>
    <ligand>
        <name>tungstopterin</name>
        <dbReference type="ChEBI" id="CHEBI:30402"/>
    </ligand>
</feature>
<feature type="binding site" evidence="1">
    <location>
        <position position="491"/>
    </location>
    <ligand>
        <name>tungstopterin</name>
        <dbReference type="ChEBI" id="CHEBI:30402"/>
    </ligand>
</feature>
<feature type="binding site" evidence="1">
    <location>
        <position position="495"/>
    </location>
    <ligand>
        <name>tungstopterin</name>
        <dbReference type="ChEBI" id="CHEBI:30402"/>
    </ligand>
</feature>
<feature type="binding site" evidence="1">
    <location>
        <position position="496"/>
    </location>
    <ligand>
        <name>[4Fe-4S] cluster</name>
        <dbReference type="ChEBI" id="CHEBI:49883"/>
    </ligand>
</feature>
<feature type="binding site" evidence="1">
    <location>
        <position position="497"/>
    </location>
    <ligand>
        <name>tungstopterin</name>
        <dbReference type="ChEBI" id="CHEBI:30402"/>
    </ligand>
</feature>
<dbReference type="EC" id="1.2.7.5" evidence="1"/>
<dbReference type="EMBL" id="AJ248286">
    <property type="protein sequence ID" value="CAB49871.1"/>
    <property type="molecule type" value="Genomic_DNA"/>
</dbReference>
<dbReference type="EMBL" id="HE613800">
    <property type="protein sequence ID" value="CCE70369.1"/>
    <property type="molecule type" value="Genomic_DNA"/>
</dbReference>
<dbReference type="PIR" id="B75071">
    <property type="entry name" value="B75071"/>
</dbReference>
<dbReference type="RefSeq" id="WP_010868080.1">
    <property type="nucleotide sequence ID" value="NC_000868.1"/>
</dbReference>
<dbReference type="SMR" id="Q9V035"/>
<dbReference type="STRING" id="272844.PAB0647"/>
<dbReference type="KEGG" id="pab:PAB0647"/>
<dbReference type="PATRIC" id="fig|272844.11.peg.1015"/>
<dbReference type="eggNOG" id="arCOG00706">
    <property type="taxonomic scope" value="Archaea"/>
</dbReference>
<dbReference type="HOGENOM" id="CLU_020364_1_0_2"/>
<dbReference type="OrthoDB" id="30771at2157"/>
<dbReference type="PhylomeDB" id="Q9V035"/>
<dbReference type="Proteomes" id="UP000000810">
    <property type="component" value="Chromosome"/>
</dbReference>
<dbReference type="Proteomes" id="UP000009139">
    <property type="component" value="Chromosome"/>
</dbReference>
<dbReference type="GO" id="GO:0051539">
    <property type="term" value="F:4 iron, 4 sulfur cluster binding"/>
    <property type="evidence" value="ECO:0007669"/>
    <property type="project" value="UniProtKB-KW"/>
</dbReference>
<dbReference type="GO" id="GO:0033726">
    <property type="term" value="F:aldehyde ferredoxin oxidoreductase activity"/>
    <property type="evidence" value="ECO:0007669"/>
    <property type="project" value="UniProtKB-EC"/>
</dbReference>
<dbReference type="GO" id="GO:0009055">
    <property type="term" value="F:electron transfer activity"/>
    <property type="evidence" value="ECO:0007669"/>
    <property type="project" value="InterPro"/>
</dbReference>
<dbReference type="GO" id="GO:0046872">
    <property type="term" value="F:metal ion binding"/>
    <property type="evidence" value="ECO:0007669"/>
    <property type="project" value="UniProtKB-KW"/>
</dbReference>
<dbReference type="Gene3D" id="1.10.569.10">
    <property type="entry name" value="Aldehyde Ferredoxin Oxidoreductase Protein, subunit A, domain 2"/>
    <property type="match status" value="1"/>
</dbReference>
<dbReference type="Gene3D" id="1.10.599.10">
    <property type="entry name" value="Aldehyde Ferredoxin Oxidoreductase Protein, subunit A, domain 3"/>
    <property type="match status" value="1"/>
</dbReference>
<dbReference type="Gene3D" id="3.60.9.10">
    <property type="entry name" value="Aldehyde ferredoxin oxidoreductase, N-terminal domain"/>
    <property type="match status" value="1"/>
</dbReference>
<dbReference type="InterPro" id="IPR013984">
    <property type="entry name" value="Ald_Fedxn_OxRdtase_dom2"/>
</dbReference>
<dbReference type="InterPro" id="IPR013985">
    <property type="entry name" value="Ald_Fedxn_OxRdtase_dom3"/>
</dbReference>
<dbReference type="InterPro" id="IPR013983">
    <property type="entry name" value="Ald_Fedxn_OxRdtase_N"/>
</dbReference>
<dbReference type="InterPro" id="IPR036503">
    <property type="entry name" value="Ald_Fedxn_OxRdtase_N_sf"/>
</dbReference>
<dbReference type="InterPro" id="IPR001203">
    <property type="entry name" value="OxRdtase_Ald_Fedxn_C"/>
</dbReference>
<dbReference type="InterPro" id="IPR036021">
    <property type="entry name" value="Tungsten_al_ferr_oxy-like_C"/>
</dbReference>
<dbReference type="InterPro" id="IPR051919">
    <property type="entry name" value="W-dependent_AOR"/>
</dbReference>
<dbReference type="PANTHER" id="PTHR30038">
    <property type="entry name" value="ALDEHYDE FERREDOXIN OXIDOREDUCTASE"/>
    <property type="match status" value="1"/>
</dbReference>
<dbReference type="PANTHER" id="PTHR30038:SF0">
    <property type="entry name" value="TUNGSTEN-CONTAINING ALDEHYDE FERREDOXIN OXIDOREDUCTASE"/>
    <property type="match status" value="1"/>
</dbReference>
<dbReference type="Pfam" id="PF01314">
    <property type="entry name" value="AFOR_C"/>
    <property type="match status" value="1"/>
</dbReference>
<dbReference type="Pfam" id="PF02730">
    <property type="entry name" value="AFOR_N"/>
    <property type="match status" value="1"/>
</dbReference>
<dbReference type="SMART" id="SM00790">
    <property type="entry name" value="AFOR_N"/>
    <property type="match status" value="1"/>
</dbReference>
<dbReference type="SUPFAM" id="SSF48310">
    <property type="entry name" value="Aldehyde ferredoxin oxidoreductase, C-terminal domains"/>
    <property type="match status" value="1"/>
</dbReference>
<dbReference type="SUPFAM" id="SSF56228">
    <property type="entry name" value="Aldehyde ferredoxin oxidoreductase, N-terminal domain"/>
    <property type="match status" value="1"/>
</dbReference>
<evidence type="ECO:0000250" key="1">
    <source>
        <dbReference type="UniProtKB" id="Q51739"/>
    </source>
</evidence>
<evidence type="ECO:0000305" key="2"/>
<organism>
    <name type="scientific">Pyrococcus abyssi (strain GE5 / Orsay)</name>
    <dbReference type="NCBI Taxonomy" id="272844"/>
    <lineage>
        <taxon>Archaea</taxon>
        <taxon>Methanobacteriati</taxon>
        <taxon>Methanobacteriota</taxon>
        <taxon>Thermococci</taxon>
        <taxon>Thermococcales</taxon>
        <taxon>Thermococcaceae</taxon>
        <taxon>Pyrococcus</taxon>
    </lineage>
</organism>
<protein>
    <recommendedName>
        <fullName evidence="1">Tungsten-containing aldehyde ferredoxin oxidoreductase</fullName>
        <ecNumber evidence="1">1.2.7.5</ecNumber>
    </recommendedName>
</protein>
<sequence>MFGYWGKILRVNLTDGTIKEETFNEEFAKKWLGTRGFGIYFLLKEMDPKVDPFSPENKLIFATGPLTGTSAPTGGRYMVITKSPLTGYIAMANSGGYFGAELKFAGWDAIIIEGKADHPVYLYIHDENVEIRDASKVWGKLVSETEKALKEEVGDKHVQIASIGPAGENKVRFAAVMNNGHRAAGRGGVGAVMGSKNLKAIVVRGHKRVEVADKGKFMEVIREKIEKLKKDPVAGGGLPKYGTAVLVNIINEHGLYPTRNFQTGVFEYAYEQSGEAMAAKYLIRNKPCFACPIGCGRVNYLPSIGETEGPEYESTWALGANLGINDLASIIEANHFADEYGMDTISLGGTLATAMELYERGLIKQEDIGGENEPPFRFGNTEVLHYWIHKIAKREGFGDILAEGGYRLAERFNGTEYFMGVKKQELPAYDPRGAEGHGLGYATNNRGGCHIKQYMISPEILGYPYKMDPHDISDEKVKMVILFQDLTALIDAAGLCLFTTFGLGADDYRDMLNAALGWDFSTEDYLKIGERIWNAERLFNLKAGLDPLKEDTLPKRLLEEPMPEGPNKGHVVRLKEMLPRYYKLRGWTEDGRIPEEKLKELGLEEFI</sequence>
<keyword id="KW-0004">4Fe-4S</keyword>
<keyword id="KW-0408">Iron</keyword>
<keyword id="KW-0411">Iron-sulfur</keyword>
<keyword id="KW-0479">Metal-binding</keyword>
<keyword id="KW-0560">Oxidoreductase</keyword>
<keyword id="KW-0826">Tungsten</keyword>
<reference key="1">
    <citation type="journal article" date="2003" name="Mol. Microbiol.">
        <title>An integrated analysis of the genome of the hyperthermophilic archaeon Pyrococcus abyssi.</title>
        <authorList>
            <person name="Cohen G.N."/>
            <person name="Barbe V."/>
            <person name="Flament D."/>
            <person name="Galperin M."/>
            <person name="Heilig R."/>
            <person name="Lecompte O."/>
            <person name="Poch O."/>
            <person name="Prieur D."/>
            <person name="Querellou J."/>
            <person name="Ripp R."/>
            <person name="Thierry J.-C."/>
            <person name="Van der Oost J."/>
            <person name="Weissenbach J."/>
            <person name="Zivanovic Y."/>
            <person name="Forterre P."/>
        </authorList>
    </citation>
    <scope>NUCLEOTIDE SEQUENCE [LARGE SCALE GENOMIC DNA]</scope>
    <source>
        <strain>GE5 / Orsay</strain>
    </source>
</reference>
<reference key="2">
    <citation type="journal article" date="2012" name="Curr. Microbiol.">
        <title>Re-annotation of two hyperthermophilic archaea Pyrococcus abyssi GE5 and Pyrococcus furiosus DSM 3638.</title>
        <authorList>
            <person name="Gao J."/>
            <person name="Wang J."/>
        </authorList>
    </citation>
    <scope>GENOME REANNOTATION</scope>
    <source>
        <strain>GE5 / Orsay</strain>
    </source>
</reference>
<proteinExistence type="inferred from homology"/>
<name>AOR_PYRAB</name>